<reference key="1">
    <citation type="journal article" date="2004" name="Proc. Natl. Acad. Sci. U.S.A.">
        <title>The complete genomic sequence of Nocardia farcinica IFM 10152.</title>
        <authorList>
            <person name="Ishikawa J."/>
            <person name="Yamashita A."/>
            <person name="Mikami Y."/>
            <person name="Hoshino Y."/>
            <person name="Kurita H."/>
            <person name="Hotta K."/>
            <person name="Shiba T."/>
            <person name="Hattori M."/>
        </authorList>
    </citation>
    <scope>NUCLEOTIDE SEQUENCE [LARGE SCALE GENOMIC DNA]</scope>
    <source>
        <strain>IFM 10152</strain>
    </source>
</reference>
<proteinExistence type="inferred from homology"/>
<evidence type="ECO:0000255" key="1">
    <source>
        <dbReference type="HAMAP-Rule" id="MF_00145"/>
    </source>
</evidence>
<dbReference type="EC" id="2.7.2.3" evidence="1"/>
<dbReference type="EMBL" id="AP006618">
    <property type="protein sequence ID" value="BAD58436.1"/>
    <property type="molecule type" value="Genomic_DNA"/>
</dbReference>
<dbReference type="RefSeq" id="WP_011210121.1">
    <property type="nucleotide sequence ID" value="NC_006361.1"/>
</dbReference>
<dbReference type="SMR" id="Q5YTQ5"/>
<dbReference type="STRING" id="247156.NFA_35880"/>
<dbReference type="GeneID" id="69054576"/>
<dbReference type="KEGG" id="nfa:NFA_35880"/>
<dbReference type="eggNOG" id="COG0126">
    <property type="taxonomic scope" value="Bacteria"/>
</dbReference>
<dbReference type="HOGENOM" id="CLU_025427_0_1_11"/>
<dbReference type="OrthoDB" id="9808460at2"/>
<dbReference type="UniPathway" id="UPA00109">
    <property type="reaction ID" value="UER00185"/>
</dbReference>
<dbReference type="Proteomes" id="UP000006820">
    <property type="component" value="Chromosome"/>
</dbReference>
<dbReference type="GO" id="GO:0005829">
    <property type="term" value="C:cytosol"/>
    <property type="evidence" value="ECO:0007669"/>
    <property type="project" value="TreeGrafter"/>
</dbReference>
<dbReference type="GO" id="GO:0043531">
    <property type="term" value="F:ADP binding"/>
    <property type="evidence" value="ECO:0007669"/>
    <property type="project" value="TreeGrafter"/>
</dbReference>
<dbReference type="GO" id="GO:0005524">
    <property type="term" value="F:ATP binding"/>
    <property type="evidence" value="ECO:0007669"/>
    <property type="project" value="UniProtKB-KW"/>
</dbReference>
<dbReference type="GO" id="GO:0004618">
    <property type="term" value="F:phosphoglycerate kinase activity"/>
    <property type="evidence" value="ECO:0007669"/>
    <property type="project" value="UniProtKB-UniRule"/>
</dbReference>
<dbReference type="GO" id="GO:0006094">
    <property type="term" value="P:gluconeogenesis"/>
    <property type="evidence" value="ECO:0007669"/>
    <property type="project" value="TreeGrafter"/>
</dbReference>
<dbReference type="GO" id="GO:0006096">
    <property type="term" value="P:glycolytic process"/>
    <property type="evidence" value="ECO:0007669"/>
    <property type="project" value="UniProtKB-UniRule"/>
</dbReference>
<dbReference type="CDD" id="cd00318">
    <property type="entry name" value="Phosphoglycerate_kinase"/>
    <property type="match status" value="1"/>
</dbReference>
<dbReference type="FunFam" id="3.40.50.1260:FF:000003">
    <property type="entry name" value="Phosphoglycerate kinase"/>
    <property type="match status" value="1"/>
</dbReference>
<dbReference type="FunFam" id="3.40.50.1260:FF:000006">
    <property type="entry name" value="Phosphoglycerate kinase"/>
    <property type="match status" value="1"/>
</dbReference>
<dbReference type="Gene3D" id="3.40.50.1260">
    <property type="entry name" value="Phosphoglycerate kinase, N-terminal domain"/>
    <property type="match status" value="2"/>
</dbReference>
<dbReference type="HAMAP" id="MF_00145">
    <property type="entry name" value="Phosphoglyc_kinase"/>
    <property type="match status" value="1"/>
</dbReference>
<dbReference type="InterPro" id="IPR001576">
    <property type="entry name" value="Phosphoglycerate_kinase"/>
</dbReference>
<dbReference type="InterPro" id="IPR015911">
    <property type="entry name" value="Phosphoglycerate_kinase_CS"/>
</dbReference>
<dbReference type="InterPro" id="IPR015824">
    <property type="entry name" value="Phosphoglycerate_kinase_N"/>
</dbReference>
<dbReference type="InterPro" id="IPR036043">
    <property type="entry name" value="Phosphoglycerate_kinase_sf"/>
</dbReference>
<dbReference type="PANTHER" id="PTHR11406">
    <property type="entry name" value="PHOSPHOGLYCERATE KINASE"/>
    <property type="match status" value="1"/>
</dbReference>
<dbReference type="PANTHER" id="PTHR11406:SF23">
    <property type="entry name" value="PHOSPHOGLYCERATE KINASE 1, CHLOROPLASTIC-RELATED"/>
    <property type="match status" value="1"/>
</dbReference>
<dbReference type="Pfam" id="PF00162">
    <property type="entry name" value="PGK"/>
    <property type="match status" value="1"/>
</dbReference>
<dbReference type="PIRSF" id="PIRSF000724">
    <property type="entry name" value="Pgk"/>
    <property type="match status" value="1"/>
</dbReference>
<dbReference type="PRINTS" id="PR00477">
    <property type="entry name" value="PHGLYCKINASE"/>
</dbReference>
<dbReference type="SUPFAM" id="SSF53748">
    <property type="entry name" value="Phosphoglycerate kinase"/>
    <property type="match status" value="1"/>
</dbReference>
<dbReference type="PROSITE" id="PS00111">
    <property type="entry name" value="PGLYCERATE_KINASE"/>
    <property type="match status" value="1"/>
</dbReference>
<sequence>MAVKTLQDLLNEGVEGRGVLVRSDLNVPLDDNGQITDPGRIIASIPTLKALVEAGAKVVVTAHLGRPKGEPDPKFSLAPVAAKLAELLGRNVQLAGDVVGYDALSRSEGLTDGDVLLLENVRFDPRETSKDEAERGKLAAALVELVGEDGAFVSDGFGVVHRKQASVYDVAKLLPHYAGTLVAAEVDVLAKLTDNTERPYAVVLGGSKVSDKLAVIEALAPKVDTLVIGGGMCFTFLAAQGLSVGSSLLQEEMIDTCKGLLERYADVIHLPRDVVVADSFSADAESKCVPANEIPDGWMGLDIGAESVDRFAALLTEAKTVFWNGPMGVFEFEKFAAGTRGVAEAIVAATGKGAFTVVGGGDSAAAVRALGLPEDGFSHISTGGGASLEYLEGKELPGISVLEDTAPEGS</sequence>
<organism>
    <name type="scientific">Nocardia farcinica (strain IFM 10152)</name>
    <dbReference type="NCBI Taxonomy" id="247156"/>
    <lineage>
        <taxon>Bacteria</taxon>
        <taxon>Bacillati</taxon>
        <taxon>Actinomycetota</taxon>
        <taxon>Actinomycetes</taxon>
        <taxon>Mycobacteriales</taxon>
        <taxon>Nocardiaceae</taxon>
        <taxon>Nocardia</taxon>
    </lineage>
</organism>
<protein>
    <recommendedName>
        <fullName evidence="1">Phosphoglycerate kinase</fullName>
        <ecNumber evidence="1">2.7.2.3</ecNumber>
    </recommendedName>
</protein>
<gene>
    <name evidence="1" type="primary">pgk</name>
    <name type="ordered locus">NFA_35880</name>
</gene>
<accession>Q5YTQ5</accession>
<keyword id="KW-0067">ATP-binding</keyword>
<keyword id="KW-0963">Cytoplasm</keyword>
<keyword id="KW-0324">Glycolysis</keyword>
<keyword id="KW-0418">Kinase</keyword>
<keyword id="KW-0547">Nucleotide-binding</keyword>
<keyword id="KW-1185">Reference proteome</keyword>
<keyword id="KW-0808">Transferase</keyword>
<comment type="catalytic activity">
    <reaction evidence="1">
        <text>(2R)-3-phosphoglycerate + ATP = (2R)-3-phospho-glyceroyl phosphate + ADP</text>
        <dbReference type="Rhea" id="RHEA:14801"/>
        <dbReference type="ChEBI" id="CHEBI:30616"/>
        <dbReference type="ChEBI" id="CHEBI:57604"/>
        <dbReference type="ChEBI" id="CHEBI:58272"/>
        <dbReference type="ChEBI" id="CHEBI:456216"/>
        <dbReference type="EC" id="2.7.2.3"/>
    </reaction>
</comment>
<comment type="pathway">
    <text evidence="1">Carbohydrate degradation; glycolysis; pyruvate from D-glyceraldehyde 3-phosphate: step 2/5.</text>
</comment>
<comment type="subunit">
    <text evidence="1">Monomer.</text>
</comment>
<comment type="subcellular location">
    <subcellularLocation>
        <location evidence="1">Cytoplasm</location>
    </subcellularLocation>
</comment>
<comment type="similarity">
    <text evidence="1">Belongs to the phosphoglycerate kinase family.</text>
</comment>
<feature type="chain" id="PRO_1000009639" description="Phosphoglycerate kinase">
    <location>
        <begin position="1"/>
        <end position="410"/>
    </location>
</feature>
<feature type="binding site" evidence="1">
    <location>
        <begin position="24"/>
        <end position="26"/>
    </location>
    <ligand>
        <name>substrate</name>
    </ligand>
</feature>
<feature type="binding site" evidence="1">
    <location>
        <position position="40"/>
    </location>
    <ligand>
        <name>substrate</name>
    </ligand>
</feature>
<feature type="binding site" evidence="1">
    <location>
        <begin position="63"/>
        <end position="66"/>
    </location>
    <ligand>
        <name>substrate</name>
    </ligand>
</feature>
<feature type="binding site" evidence="1">
    <location>
        <position position="122"/>
    </location>
    <ligand>
        <name>substrate</name>
    </ligand>
</feature>
<feature type="binding site" evidence="1">
    <location>
        <position position="162"/>
    </location>
    <ligand>
        <name>substrate</name>
    </ligand>
</feature>
<feature type="binding site" evidence="1">
    <location>
        <position position="212"/>
    </location>
    <ligand>
        <name>ATP</name>
        <dbReference type="ChEBI" id="CHEBI:30616"/>
    </ligand>
</feature>
<feature type="binding site" evidence="1">
    <location>
        <position position="300"/>
    </location>
    <ligand>
        <name>ATP</name>
        <dbReference type="ChEBI" id="CHEBI:30616"/>
    </ligand>
</feature>
<feature type="binding site" evidence="1">
    <location>
        <position position="331"/>
    </location>
    <ligand>
        <name>ATP</name>
        <dbReference type="ChEBI" id="CHEBI:30616"/>
    </ligand>
</feature>
<feature type="binding site" evidence="1">
    <location>
        <begin position="360"/>
        <end position="363"/>
    </location>
    <ligand>
        <name>ATP</name>
        <dbReference type="ChEBI" id="CHEBI:30616"/>
    </ligand>
</feature>
<name>PGK_NOCFA</name>